<name>DNAJ_BRUA2</name>
<protein>
    <recommendedName>
        <fullName evidence="1">Chaperone protein DnaJ</fullName>
    </recommendedName>
</protein>
<feature type="chain" id="PRO_1000085150" description="Chaperone protein DnaJ">
    <location>
        <begin position="1"/>
        <end position="377"/>
    </location>
</feature>
<feature type="domain" description="J" evidence="1">
    <location>
        <begin position="4"/>
        <end position="69"/>
    </location>
</feature>
<feature type="repeat" description="CXXCXGXG motif">
    <location>
        <begin position="148"/>
        <end position="155"/>
    </location>
</feature>
<feature type="repeat" description="CXXCXGXG motif">
    <location>
        <begin position="165"/>
        <end position="172"/>
    </location>
</feature>
<feature type="repeat" description="CXXCXGXG motif">
    <location>
        <begin position="187"/>
        <end position="194"/>
    </location>
</feature>
<feature type="repeat" description="CXXCXGXG motif">
    <location>
        <begin position="201"/>
        <end position="208"/>
    </location>
</feature>
<feature type="zinc finger region" description="CR-type" evidence="1">
    <location>
        <begin position="135"/>
        <end position="213"/>
    </location>
</feature>
<feature type="binding site" evidence="1">
    <location>
        <position position="148"/>
    </location>
    <ligand>
        <name>Zn(2+)</name>
        <dbReference type="ChEBI" id="CHEBI:29105"/>
        <label>1</label>
    </ligand>
</feature>
<feature type="binding site" evidence="1">
    <location>
        <position position="151"/>
    </location>
    <ligand>
        <name>Zn(2+)</name>
        <dbReference type="ChEBI" id="CHEBI:29105"/>
        <label>1</label>
    </ligand>
</feature>
<feature type="binding site" evidence="1">
    <location>
        <position position="165"/>
    </location>
    <ligand>
        <name>Zn(2+)</name>
        <dbReference type="ChEBI" id="CHEBI:29105"/>
        <label>2</label>
    </ligand>
</feature>
<feature type="binding site" evidence="1">
    <location>
        <position position="168"/>
    </location>
    <ligand>
        <name>Zn(2+)</name>
        <dbReference type="ChEBI" id="CHEBI:29105"/>
        <label>2</label>
    </ligand>
</feature>
<feature type="binding site" evidence="1">
    <location>
        <position position="187"/>
    </location>
    <ligand>
        <name>Zn(2+)</name>
        <dbReference type="ChEBI" id="CHEBI:29105"/>
        <label>2</label>
    </ligand>
</feature>
<feature type="binding site" evidence="1">
    <location>
        <position position="190"/>
    </location>
    <ligand>
        <name>Zn(2+)</name>
        <dbReference type="ChEBI" id="CHEBI:29105"/>
        <label>2</label>
    </ligand>
</feature>
<feature type="binding site" evidence="1">
    <location>
        <position position="201"/>
    </location>
    <ligand>
        <name>Zn(2+)</name>
        <dbReference type="ChEBI" id="CHEBI:29105"/>
        <label>1</label>
    </ligand>
</feature>
<feature type="binding site" evidence="1">
    <location>
        <position position="204"/>
    </location>
    <ligand>
        <name>Zn(2+)</name>
        <dbReference type="ChEBI" id="CHEBI:29105"/>
        <label>1</label>
    </ligand>
</feature>
<comment type="function">
    <text evidence="1">Participates actively in the response to hyperosmotic and heat shock by preventing the aggregation of stress-denatured proteins and by disaggregating proteins, also in an autonomous, DnaK-independent fashion. Unfolded proteins bind initially to DnaJ; upon interaction with the DnaJ-bound protein, DnaK hydrolyzes its bound ATP, resulting in the formation of a stable complex. GrpE releases ADP from DnaK; ATP binding to DnaK triggers the release of the substrate protein, thus completing the reaction cycle. Several rounds of ATP-dependent interactions between DnaJ, DnaK and GrpE are required for fully efficient folding. Also involved, together with DnaK and GrpE, in the DNA replication of plasmids through activation of initiation proteins.</text>
</comment>
<comment type="cofactor">
    <cofactor evidence="1">
        <name>Zn(2+)</name>
        <dbReference type="ChEBI" id="CHEBI:29105"/>
    </cofactor>
    <text evidence="1">Binds 2 Zn(2+) ions per monomer.</text>
</comment>
<comment type="subunit">
    <text evidence="1">Homodimer.</text>
</comment>
<comment type="subcellular location">
    <subcellularLocation>
        <location evidence="1">Cytoplasm</location>
    </subcellularLocation>
</comment>
<comment type="domain">
    <text evidence="1">The J domain is necessary and sufficient to stimulate DnaK ATPase activity. Zinc center 1 plays an important role in the autonomous, DnaK-independent chaperone activity of DnaJ. Zinc center 2 is essential for interaction with DnaK and for DnaJ activity.</text>
</comment>
<comment type="similarity">
    <text evidence="1">Belongs to the DnaJ family.</text>
</comment>
<accession>Q2YQV1</accession>
<sequence length="377" mass="41108">MKIDYYEALGVTRTADDKTLKAAFRKLAMQYHPDRNPDDPEAERKFKEIGEAYETLKDPQKRAAYDRFGHAAFENGGMGGGFGNGFGGAGGFADIFEDIFGEMMGGGRRRSNGGRERGADLRYNMEVTLEEAYAGKTAQIRVPTSITCDECSGSGAKPGSQPTTCTMCSGSGRVRAAQGFFSVERTCPGCNGRGQIIKDPCEKCHGQGRVTQERSLSVNIPTGIEDGTRIRLAGEGEAGLRGGPAGDLYIFLSVKPHEFFQRDGADLYCKVPISMTTAALGGQFEVSTLDGTQTRVKVPEGTQNGKQFRLKGKGMPVLRQSVTGDLYIQIDIETPQNLSKRQRELLEEFEKLSSQENSPKSAGFFSRMKEFFEGIGE</sequence>
<dbReference type="EMBL" id="AM040264">
    <property type="protein sequence ID" value="CAJ12086.1"/>
    <property type="molecule type" value="Genomic_DNA"/>
</dbReference>
<dbReference type="RefSeq" id="WP_002965191.1">
    <property type="nucleotide sequence ID" value="NZ_KN046823.1"/>
</dbReference>
<dbReference type="SMR" id="Q2YQV1"/>
<dbReference type="STRING" id="359391.BAB1_2130"/>
<dbReference type="GeneID" id="93017567"/>
<dbReference type="KEGG" id="bmf:BAB1_2130"/>
<dbReference type="PATRIC" id="fig|359391.11.peg.1363"/>
<dbReference type="HOGENOM" id="CLU_017633_0_7_5"/>
<dbReference type="PhylomeDB" id="Q2YQV1"/>
<dbReference type="PRO" id="PR:Q2YQV1"/>
<dbReference type="Proteomes" id="UP000002719">
    <property type="component" value="Chromosome I"/>
</dbReference>
<dbReference type="GO" id="GO:0005737">
    <property type="term" value="C:cytoplasm"/>
    <property type="evidence" value="ECO:0007669"/>
    <property type="project" value="UniProtKB-SubCell"/>
</dbReference>
<dbReference type="GO" id="GO:0005524">
    <property type="term" value="F:ATP binding"/>
    <property type="evidence" value="ECO:0007669"/>
    <property type="project" value="InterPro"/>
</dbReference>
<dbReference type="GO" id="GO:0031072">
    <property type="term" value="F:heat shock protein binding"/>
    <property type="evidence" value="ECO:0007669"/>
    <property type="project" value="InterPro"/>
</dbReference>
<dbReference type="GO" id="GO:0051082">
    <property type="term" value="F:unfolded protein binding"/>
    <property type="evidence" value="ECO:0007669"/>
    <property type="project" value="UniProtKB-UniRule"/>
</dbReference>
<dbReference type="GO" id="GO:0008270">
    <property type="term" value="F:zinc ion binding"/>
    <property type="evidence" value="ECO:0007669"/>
    <property type="project" value="UniProtKB-UniRule"/>
</dbReference>
<dbReference type="GO" id="GO:0051085">
    <property type="term" value="P:chaperone cofactor-dependent protein refolding"/>
    <property type="evidence" value="ECO:0007669"/>
    <property type="project" value="TreeGrafter"/>
</dbReference>
<dbReference type="GO" id="GO:0006260">
    <property type="term" value="P:DNA replication"/>
    <property type="evidence" value="ECO:0007669"/>
    <property type="project" value="UniProtKB-KW"/>
</dbReference>
<dbReference type="GO" id="GO:0042026">
    <property type="term" value="P:protein refolding"/>
    <property type="evidence" value="ECO:0007669"/>
    <property type="project" value="TreeGrafter"/>
</dbReference>
<dbReference type="GO" id="GO:0009408">
    <property type="term" value="P:response to heat"/>
    <property type="evidence" value="ECO:0007669"/>
    <property type="project" value="InterPro"/>
</dbReference>
<dbReference type="CDD" id="cd06257">
    <property type="entry name" value="DnaJ"/>
    <property type="match status" value="1"/>
</dbReference>
<dbReference type="CDD" id="cd10747">
    <property type="entry name" value="DnaJ_C"/>
    <property type="match status" value="1"/>
</dbReference>
<dbReference type="CDD" id="cd10719">
    <property type="entry name" value="DnaJ_zf"/>
    <property type="match status" value="1"/>
</dbReference>
<dbReference type="FunFam" id="1.10.287.110:FF:000034">
    <property type="entry name" value="Chaperone protein DnaJ"/>
    <property type="match status" value="1"/>
</dbReference>
<dbReference type="FunFam" id="2.10.230.10:FF:000002">
    <property type="entry name" value="Molecular chaperone DnaJ"/>
    <property type="match status" value="1"/>
</dbReference>
<dbReference type="FunFam" id="2.60.260.20:FF:000004">
    <property type="entry name" value="Molecular chaperone DnaJ"/>
    <property type="match status" value="1"/>
</dbReference>
<dbReference type="Gene3D" id="1.10.287.110">
    <property type="entry name" value="DnaJ domain"/>
    <property type="match status" value="1"/>
</dbReference>
<dbReference type="Gene3D" id="2.10.230.10">
    <property type="entry name" value="Heat shock protein DnaJ, cysteine-rich domain"/>
    <property type="match status" value="1"/>
</dbReference>
<dbReference type="Gene3D" id="2.60.260.20">
    <property type="entry name" value="Urease metallochaperone UreE, N-terminal domain"/>
    <property type="match status" value="2"/>
</dbReference>
<dbReference type="HAMAP" id="MF_01152">
    <property type="entry name" value="DnaJ"/>
    <property type="match status" value="1"/>
</dbReference>
<dbReference type="InterPro" id="IPR012724">
    <property type="entry name" value="DnaJ"/>
</dbReference>
<dbReference type="InterPro" id="IPR002939">
    <property type="entry name" value="DnaJ_C"/>
</dbReference>
<dbReference type="InterPro" id="IPR001623">
    <property type="entry name" value="DnaJ_domain"/>
</dbReference>
<dbReference type="InterPro" id="IPR018253">
    <property type="entry name" value="DnaJ_domain_CS"/>
</dbReference>
<dbReference type="InterPro" id="IPR008971">
    <property type="entry name" value="HSP40/DnaJ_pept-bd"/>
</dbReference>
<dbReference type="InterPro" id="IPR001305">
    <property type="entry name" value="HSP_DnaJ_Cys-rich_dom"/>
</dbReference>
<dbReference type="InterPro" id="IPR036410">
    <property type="entry name" value="HSP_DnaJ_Cys-rich_dom_sf"/>
</dbReference>
<dbReference type="InterPro" id="IPR036869">
    <property type="entry name" value="J_dom_sf"/>
</dbReference>
<dbReference type="NCBIfam" id="TIGR02349">
    <property type="entry name" value="DnaJ_bact"/>
    <property type="match status" value="1"/>
</dbReference>
<dbReference type="NCBIfam" id="NF008035">
    <property type="entry name" value="PRK10767.1"/>
    <property type="match status" value="1"/>
</dbReference>
<dbReference type="PANTHER" id="PTHR43096:SF48">
    <property type="entry name" value="CHAPERONE PROTEIN DNAJ"/>
    <property type="match status" value="1"/>
</dbReference>
<dbReference type="PANTHER" id="PTHR43096">
    <property type="entry name" value="DNAJ HOMOLOG 1, MITOCHONDRIAL-RELATED"/>
    <property type="match status" value="1"/>
</dbReference>
<dbReference type="Pfam" id="PF00226">
    <property type="entry name" value="DnaJ"/>
    <property type="match status" value="1"/>
</dbReference>
<dbReference type="Pfam" id="PF01556">
    <property type="entry name" value="DnaJ_C"/>
    <property type="match status" value="1"/>
</dbReference>
<dbReference type="Pfam" id="PF00684">
    <property type="entry name" value="DnaJ_CXXCXGXG"/>
    <property type="match status" value="1"/>
</dbReference>
<dbReference type="PRINTS" id="PR00625">
    <property type="entry name" value="JDOMAIN"/>
</dbReference>
<dbReference type="SMART" id="SM00271">
    <property type="entry name" value="DnaJ"/>
    <property type="match status" value="1"/>
</dbReference>
<dbReference type="SUPFAM" id="SSF46565">
    <property type="entry name" value="Chaperone J-domain"/>
    <property type="match status" value="1"/>
</dbReference>
<dbReference type="SUPFAM" id="SSF57938">
    <property type="entry name" value="DnaJ/Hsp40 cysteine-rich domain"/>
    <property type="match status" value="1"/>
</dbReference>
<dbReference type="SUPFAM" id="SSF49493">
    <property type="entry name" value="HSP40/DnaJ peptide-binding domain"/>
    <property type="match status" value="2"/>
</dbReference>
<dbReference type="PROSITE" id="PS00636">
    <property type="entry name" value="DNAJ_1"/>
    <property type="match status" value="1"/>
</dbReference>
<dbReference type="PROSITE" id="PS50076">
    <property type="entry name" value="DNAJ_2"/>
    <property type="match status" value="1"/>
</dbReference>
<dbReference type="PROSITE" id="PS51188">
    <property type="entry name" value="ZF_CR"/>
    <property type="match status" value="1"/>
</dbReference>
<evidence type="ECO:0000255" key="1">
    <source>
        <dbReference type="HAMAP-Rule" id="MF_01152"/>
    </source>
</evidence>
<proteinExistence type="inferred from homology"/>
<reference key="1">
    <citation type="journal article" date="2005" name="Infect. Immun.">
        <title>Whole-genome analyses of speciation events in pathogenic Brucellae.</title>
        <authorList>
            <person name="Chain P.S."/>
            <person name="Comerci D.J."/>
            <person name="Tolmasky M.E."/>
            <person name="Larimer F.W."/>
            <person name="Malfatti S.A."/>
            <person name="Vergez L.M."/>
            <person name="Aguero F."/>
            <person name="Land M.L."/>
            <person name="Ugalde R.A."/>
            <person name="Garcia E."/>
        </authorList>
    </citation>
    <scope>NUCLEOTIDE SEQUENCE [LARGE SCALE GENOMIC DNA]</scope>
    <source>
        <strain>2308</strain>
    </source>
</reference>
<gene>
    <name evidence="1" type="primary">dnaJ</name>
    <name type="ordered locus">BAB1_2130</name>
</gene>
<keyword id="KW-0143">Chaperone</keyword>
<keyword id="KW-0963">Cytoplasm</keyword>
<keyword id="KW-0235">DNA replication</keyword>
<keyword id="KW-0479">Metal-binding</keyword>
<keyword id="KW-1185">Reference proteome</keyword>
<keyword id="KW-0677">Repeat</keyword>
<keyword id="KW-0346">Stress response</keyword>
<keyword id="KW-0862">Zinc</keyword>
<keyword id="KW-0863">Zinc-finger</keyword>
<organism>
    <name type="scientific">Brucella abortus (strain 2308)</name>
    <dbReference type="NCBI Taxonomy" id="359391"/>
    <lineage>
        <taxon>Bacteria</taxon>
        <taxon>Pseudomonadati</taxon>
        <taxon>Pseudomonadota</taxon>
        <taxon>Alphaproteobacteria</taxon>
        <taxon>Hyphomicrobiales</taxon>
        <taxon>Brucellaceae</taxon>
        <taxon>Brucella/Ochrobactrum group</taxon>
        <taxon>Brucella</taxon>
    </lineage>
</organism>